<organism>
    <name type="scientific">Mycobacterium bovis (strain BCG / Tokyo 172 / ATCC 35737 / TMC 1019)</name>
    <dbReference type="NCBI Taxonomy" id="561275"/>
    <lineage>
        <taxon>Bacteria</taxon>
        <taxon>Bacillati</taxon>
        <taxon>Actinomycetota</taxon>
        <taxon>Actinomycetes</taxon>
        <taxon>Mycobacteriales</taxon>
        <taxon>Mycobacteriaceae</taxon>
        <taxon>Mycobacterium</taxon>
        <taxon>Mycobacterium tuberculosis complex</taxon>
    </lineage>
</organism>
<comment type="function">
    <text evidence="1">Catalyzes the transfer of the diacylglyceryl group from phosphatidylglycerol to the sulfhydryl group of the N-terminal cysteine of a prolipoprotein, the first step in the formation of mature lipoproteins.</text>
</comment>
<comment type="catalytic activity">
    <reaction evidence="1">
        <text>L-cysteinyl-[prolipoprotein] + a 1,2-diacyl-sn-glycero-3-phospho-(1'-sn-glycerol) = an S-1,2-diacyl-sn-glyceryl-L-cysteinyl-[prolipoprotein] + sn-glycerol 1-phosphate + H(+)</text>
        <dbReference type="Rhea" id="RHEA:56712"/>
        <dbReference type="Rhea" id="RHEA-COMP:14679"/>
        <dbReference type="Rhea" id="RHEA-COMP:14680"/>
        <dbReference type="ChEBI" id="CHEBI:15378"/>
        <dbReference type="ChEBI" id="CHEBI:29950"/>
        <dbReference type="ChEBI" id="CHEBI:57685"/>
        <dbReference type="ChEBI" id="CHEBI:64716"/>
        <dbReference type="ChEBI" id="CHEBI:140658"/>
        <dbReference type="EC" id="2.5.1.145"/>
    </reaction>
</comment>
<comment type="pathway">
    <text evidence="1">Protein modification; lipoprotein biosynthesis (diacylglyceryl transfer).</text>
</comment>
<comment type="subcellular location">
    <subcellularLocation>
        <location evidence="1">Cell membrane</location>
        <topology evidence="1">Multi-pass membrane protein</topology>
    </subcellularLocation>
</comment>
<comment type="similarity">
    <text evidence="1">Belongs to the Lgt family.</text>
</comment>
<reference key="1">
    <citation type="journal article" date="2009" name="Vaccine">
        <title>Whole genome sequence analysis of Mycobacterium bovis bacillus Calmette-Guerin (BCG) Tokyo 172: a comparative study of BCG vaccine substrains.</title>
        <authorList>
            <person name="Seki M."/>
            <person name="Honda I."/>
            <person name="Fujita I."/>
            <person name="Yano I."/>
            <person name="Yamamoto S."/>
            <person name="Koyama A."/>
        </authorList>
    </citation>
    <scope>NUCLEOTIDE SEQUENCE [LARGE SCALE GENOMIC DNA]</scope>
    <source>
        <strain>BCG / Tokyo 172 / ATCC 35737 / TMC 1019</strain>
    </source>
</reference>
<protein>
    <recommendedName>
        <fullName evidence="1">Phosphatidylglycerol--prolipoprotein diacylglyceryl transferase</fullName>
        <ecNumber evidence="1">2.5.1.145</ecNumber>
    </recommendedName>
</protein>
<accession>C1ANN6</accession>
<dbReference type="EC" id="2.5.1.145" evidence="1"/>
<dbReference type="EMBL" id="AP010918">
    <property type="protein sequence ID" value="BAH25915.1"/>
    <property type="molecule type" value="Genomic_DNA"/>
</dbReference>
<dbReference type="RefSeq" id="WP_003408002.1">
    <property type="nucleotide sequence ID" value="NZ_CP014566.1"/>
</dbReference>
<dbReference type="SMR" id="C1ANN6"/>
<dbReference type="KEGG" id="mbt:JTY_1627"/>
<dbReference type="HOGENOM" id="CLU_013386_2_1_11"/>
<dbReference type="UniPathway" id="UPA00664"/>
<dbReference type="GO" id="GO:0005886">
    <property type="term" value="C:plasma membrane"/>
    <property type="evidence" value="ECO:0007669"/>
    <property type="project" value="UniProtKB-SubCell"/>
</dbReference>
<dbReference type="GO" id="GO:0008961">
    <property type="term" value="F:phosphatidylglycerol-prolipoprotein diacylglyceryl transferase activity"/>
    <property type="evidence" value="ECO:0007669"/>
    <property type="project" value="UniProtKB-UniRule"/>
</dbReference>
<dbReference type="GO" id="GO:0042158">
    <property type="term" value="P:lipoprotein biosynthetic process"/>
    <property type="evidence" value="ECO:0007669"/>
    <property type="project" value="UniProtKB-UniRule"/>
</dbReference>
<dbReference type="HAMAP" id="MF_01147">
    <property type="entry name" value="Lgt"/>
    <property type="match status" value="1"/>
</dbReference>
<dbReference type="InterPro" id="IPR001640">
    <property type="entry name" value="Lgt"/>
</dbReference>
<dbReference type="NCBIfam" id="TIGR00544">
    <property type="entry name" value="lgt"/>
    <property type="match status" value="1"/>
</dbReference>
<dbReference type="NCBIfam" id="NF009611">
    <property type="entry name" value="PRK13108.1"/>
    <property type="match status" value="1"/>
</dbReference>
<dbReference type="PANTHER" id="PTHR30589:SF0">
    <property type="entry name" value="PHOSPHATIDYLGLYCEROL--PROLIPOPROTEIN DIACYLGLYCERYL TRANSFERASE"/>
    <property type="match status" value="1"/>
</dbReference>
<dbReference type="PANTHER" id="PTHR30589">
    <property type="entry name" value="PROLIPOPROTEIN DIACYLGLYCERYL TRANSFERASE"/>
    <property type="match status" value="1"/>
</dbReference>
<dbReference type="Pfam" id="PF01790">
    <property type="entry name" value="LGT"/>
    <property type="match status" value="1"/>
</dbReference>
<dbReference type="PROSITE" id="PS01311">
    <property type="entry name" value="LGT"/>
    <property type="match status" value="1"/>
</dbReference>
<gene>
    <name evidence="1" type="primary">lgt</name>
    <name type="ordered locus">JTY_1627</name>
</gene>
<name>LGT_MYCBT</name>
<evidence type="ECO:0000255" key="1">
    <source>
        <dbReference type="HAMAP-Rule" id="MF_01147"/>
    </source>
</evidence>
<evidence type="ECO:0000256" key="2">
    <source>
        <dbReference type="SAM" id="MobiDB-lite"/>
    </source>
</evidence>
<keyword id="KW-1003">Cell membrane</keyword>
<keyword id="KW-0472">Membrane</keyword>
<keyword id="KW-0808">Transferase</keyword>
<keyword id="KW-0812">Transmembrane</keyword>
<keyword id="KW-1133">Transmembrane helix</keyword>
<sequence>MRMLPSYIPSPPRGVWYLGPLPVRAYAVCVITGIIVALLIGDRRLTARGGERGMTYDIALWAVPFGLIGGRLYHLATDWRTYFGDGGAGLAAALRIWDGGLGIWGAVTLGVMGAWIGCRRCGIPLPVLLDAVAPGVVLAQAIGRLGNYFNQELYGRETTMPWGLEIFYRRDPSGFDVPNSLDGVSTGQVAFVVQPTFLYELIWNVLVFVALIYIDRRFIIGHGRLFGFYVAFYCAGRFCVELLRDDPATLIAGIRINSFTSTFVFIGAVVYIILAPKGREAPGALRGSEYVVDEALEREPAELAAAAVASAASAVGPVGPGEPNQPDDVAEAVKAEVAEVTDEVAAESVVQVADRDGESTPAVEETSEADIEREQPGDLAGQAPAAHQVDAEAASAAPEEPAALASEAHDETEPEVPEKAAPIPDPAKPDELAVAGPGDDPAEPDGIRRQDDFSSRRRRWWRLRRRRQ</sequence>
<feature type="chain" id="PRO_1000164143" description="Phosphatidylglycerol--prolipoprotein diacylglyceryl transferase">
    <location>
        <begin position="1"/>
        <end position="468"/>
    </location>
</feature>
<feature type="transmembrane region" description="Helical" evidence="1">
    <location>
        <begin position="21"/>
        <end position="41"/>
    </location>
</feature>
<feature type="transmembrane region" description="Helical" evidence="1">
    <location>
        <begin position="56"/>
        <end position="76"/>
    </location>
</feature>
<feature type="transmembrane region" description="Helical" evidence="1">
    <location>
        <begin position="96"/>
        <end position="116"/>
    </location>
</feature>
<feature type="transmembrane region" description="Helical" evidence="1">
    <location>
        <begin position="192"/>
        <end position="212"/>
    </location>
</feature>
<feature type="transmembrane region" description="Helical" evidence="1">
    <location>
        <begin position="218"/>
        <end position="238"/>
    </location>
</feature>
<feature type="transmembrane region" description="Helical" evidence="1">
    <location>
        <begin position="256"/>
        <end position="276"/>
    </location>
</feature>
<feature type="region of interest" description="Disordered" evidence="2">
    <location>
        <begin position="349"/>
        <end position="468"/>
    </location>
</feature>
<feature type="compositionally biased region" description="Low complexity" evidence="2">
    <location>
        <begin position="391"/>
        <end position="406"/>
    </location>
</feature>
<feature type="compositionally biased region" description="Basic and acidic residues" evidence="2">
    <location>
        <begin position="445"/>
        <end position="455"/>
    </location>
</feature>
<feature type="compositionally biased region" description="Basic residues" evidence="2">
    <location>
        <begin position="456"/>
        <end position="468"/>
    </location>
</feature>
<feature type="binding site" evidence="1">
    <location>
        <position position="144"/>
    </location>
    <ligand>
        <name>a 1,2-diacyl-sn-glycero-3-phospho-(1'-sn-glycerol)</name>
        <dbReference type="ChEBI" id="CHEBI:64716"/>
    </ligand>
</feature>
<proteinExistence type="inferred from homology"/>